<evidence type="ECO:0000250" key="1">
    <source>
        <dbReference type="UniProtKB" id="Q5SV66"/>
    </source>
</evidence>
<evidence type="ECO:0000250" key="2">
    <source>
        <dbReference type="UniProtKB" id="Q96M95"/>
    </source>
</evidence>
<evidence type="ECO:0000255" key="3"/>
<evidence type="ECO:0000305" key="4"/>
<accession>A6QQM8</accession>
<sequence>MSLGIMEEEDLAEYFRLQYGERLLQLLQKFPSIEDQSDSPSVRLLEKKKEAKIMHHAMEQKKETFQRRMETLNLRWEELGIKEAQLKAHIQKFEQFIQENDQKRIRALKKANKERELKRQRMRELAKAKQEMAVLRLEHQRLSAKLQEYSIFNKYLEKVVENSEFEEIHEVIARYKTLVSMHHDLMQSAQEGQEKIERAKARLARYKEEKDDEILQHNNELARLQMRFDRARSDVIIWESRWAHIQNTAAKKTLLLGTIKMATLNLFQIVSKQLKEATFVSLEDTHKQLDMIQQFIQDLSDIWAEVKKKELQQIRV</sequence>
<comment type="function">
    <text evidence="1">Essential for male fertility. Required for sperm development.</text>
</comment>
<comment type="subunit">
    <text evidence="1">Interacts with ODF1 and ODF2. Interacts with CCDC38. Interacts with CCDC146. Interacts with CFAP53.</text>
</comment>
<comment type="subcellular location">
    <subcellularLocation>
        <location evidence="1">Cytoplasm</location>
        <location evidence="1">Perinuclear region</location>
    </subcellularLocation>
    <subcellularLocation>
        <location evidence="1">Cytoplasm</location>
        <location evidence="1">Cytoskeleton</location>
    </subcellularLocation>
    <subcellularLocation>
        <location evidence="1">Cell projection</location>
        <location evidence="1">Cilium</location>
        <location evidence="1">Flagellum</location>
    </subcellularLocation>
    <subcellularLocation>
        <location evidence="1">Cytoplasm</location>
        <location evidence="1">Cytoskeleton</location>
        <location evidence="1">Microtubule organizing center</location>
        <location evidence="1">Centrosome</location>
    </subcellularLocation>
    <text evidence="1">Weakly expressed in the cytoplasm of round spermatids. In elongating spermatids, localizes to the manchette microtubules and the perinuclear ring. In the sperm flagellum, strongly expressed in the principle piece and also located to the connecting piece and weakly to the midpiece. Localizes to the centrosome in somatic cells.</text>
</comment>
<comment type="similarity">
    <text evidence="4">Belongs to the CFAP73 family.</text>
</comment>
<keyword id="KW-0966">Cell projection</keyword>
<keyword id="KW-0969">Cilium</keyword>
<keyword id="KW-0175">Coiled coil</keyword>
<keyword id="KW-0963">Cytoplasm</keyword>
<keyword id="KW-0206">Cytoskeleton</keyword>
<keyword id="KW-0221">Differentiation</keyword>
<keyword id="KW-0282">Flagellum</keyword>
<keyword id="KW-1185">Reference proteome</keyword>
<keyword id="KW-0744">Spermatogenesis</keyword>
<dbReference type="EMBL" id="BC149908">
    <property type="protein sequence ID" value="AAI49909.1"/>
    <property type="molecule type" value="mRNA"/>
</dbReference>
<dbReference type="RefSeq" id="NP_001094636.1">
    <property type="nucleotide sequence ID" value="NM_001101166.2"/>
</dbReference>
<dbReference type="SMR" id="A6QQM8"/>
<dbReference type="FunCoup" id="A6QQM8">
    <property type="interactions" value="3"/>
</dbReference>
<dbReference type="STRING" id="9913.ENSBTAP00000024503"/>
<dbReference type="PaxDb" id="9913-ENSBTAP00000024503"/>
<dbReference type="Ensembl" id="ENSBTAT00000024503.6">
    <property type="protein sequence ID" value="ENSBTAP00000024503.4"/>
    <property type="gene ID" value="ENSBTAG00000018416.6"/>
</dbReference>
<dbReference type="GeneID" id="536427"/>
<dbReference type="KEGG" id="bta:536427"/>
<dbReference type="CTD" id="146849"/>
<dbReference type="VEuPathDB" id="HostDB:ENSBTAG00000018416"/>
<dbReference type="VGNC" id="VGNC:26896">
    <property type="gene designation" value="CCDC42"/>
</dbReference>
<dbReference type="eggNOG" id="ENOG502QRZS">
    <property type="taxonomic scope" value="Eukaryota"/>
</dbReference>
<dbReference type="GeneTree" id="ENSGT00940000153110"/>
<dbReference type="HOGENOM" id="CLU_061472_1_0_1"/>
<dbReference type="InParanoid" id="A6QQM8"/>
<dbReference type="OMA" id="CADKKRV"/>
<dbReference type="OrthoDB" id="2134857at2759"/>
<dbReference type="TreeFam" id="TF327270"/>
<dbReference type="Proteomes" id="UP000009136">
    <property type="component" value="Chromosome 19"/>
</dbReference>
<dbReference type="Bgee" id="ENSBTAG00000018416">
    <property type="expression patterns" value="Expressed in oocyte and 51 other cell types or tissues"/>
</dbReference>
<dbReference type="GO" id="GO:0005813">
    <property type="term" value="C:centrosome"/>
    <property type="evidence" value="ECO:0000250"/>
    <property type="project" value="UniProtKB"/>
</dbReference>
<dbReference type="GO" id="GO:0002177">
    <property type="term" value="C:manchette"/>
    <property type="evidence" value="ECO:0000250"/>
    <property type="project" value="UniProtKB"/>
</dbReference>
<dbReference type="GO" id="GO:0048471">
    <property type="term" value="C:perinuclear region of cytoplasm"/>
    <property type="evidence" value="ECO:0000250"/>
    <property type="project" value="UniProtKB"/>
</dbReference>
<dbReference type="GO" id="GO:0120212">
    <property type="term" value="C:sperm head-tail coupling apparatus"/>
    <property type="evidence" value="ECO:0000250"/>
    <property type="project" value="UniProtKB"/>
</dbReference>
<dbReference type="GO" id="GO:0097228">
    <property type="term" value="C:sperm principal piece"/>
    <property type="evidence" value="ECO:0000250"/>
    <property type="project" value="UniProtKB"/>
</dbReference>
<dbReference type="GO" id="GO:0001675">
    <property type="term" value="P:acrosome assembly"/>
    <property type="evidence" value="ECO:0007669"/>
    <property type="project" value="Ensembl"/>
</dbReference>
<dbReference type="GO" id="GO:0007098">
    <property type="term" value="P:centrosome cycle"/>
    <property type="evidence" value="ECO:0007669"/>
    <property type="project" value="Ensembl"/>
</dbReference>
<dbReference type="GO" id="GO:0060271">
    <property type="term" value="P:cilium assembly"/>
    <property type="evidence" value="ECO:0007669"/>
    <property type="project" value="Ensembl"/>
</dbReference>
<dbReference type="GO" id="GO:0007286">
    <property type="term" value="P:spermatid development"/>
    <property type="evidence" value="ECO:0000250"/>
    <property type="project" value="UniProtKB"/>
</dbReference>
<dbReference type="InterPro" id="IPR051147">
    <property type="entry name" value="CFAP_domain-containing"/>
</dbReference>
<dbReference type="InterPro" id="IPR025252">
    <property type="entry name" value="DUF4200"/>
</dbReference>
<dbReference type="PANTHER" id="PTHR21683:SF8">
    <property type="entry name" value="COILED-COIL DOMAIN-CONTAINING PROTEIN 42"/>
    <property type="match status" value="1"/>
</dbReference>
<dbReference type="PANTHER" id="PTHR21683">
    <property type="entry name" value="COILED-COIL DOMAIN-CONTAINING PROTEIN 42 LIKE-2-LIKE-RELATED"/>
    <property type="match status" value="1"/>
</dbReference>
<dbReference type="Pfam" id="PF13863">
    <property type="entry name" value="DUF4200"/>
    <property type="match status" value="1"/>
</dbReference>
<protein>
    <recommendedName>
        <fullName evidence="4">Coiled-coil domain-containing protein 42</fullName>
    </recommendedName>
</protein>
<reference key="1">
    <citation type="submission" date="2007-07" db="EMBL/GenBank/DDBJ databases">
        <authorList>
            <consortium name="NIH - Mammalian Gene Collection (MGC) project"/>
        </authorList>
    </citation>
    <scope>NUCLEOTIDE SEQUENCE [LARGE SCALE MRNA]</scope>
    <source>
        <strain>Crossbred X Angus</strain>
        <tissue>Liver</tissue>
    </source>
</reference>
<feature type="chain" id="PRO_0000343713" description="Coiled-coil domain-containing protein 42">
    <location>
        <begin position="1"/>
        <end position="316"/>
    </location>
</feature>
<feature type="coiled-coil region" evidence="3">
    <location>
        <begin position="43"/>
        <end position="151"/>
    </location>
</feature>
<feature type="coiled-coil region" evidence="3">
    <location>
        <begin position="182"/>
        <end position="236"/>
    </location>
</feature>
<name>CCD42_BOVIN</name>
<gene>
    <name evidence="2" type="primary">CCDC42</name>
</gene>
<proteinExistence type="evidence at transcript level"/>
<organism>
    <name type="scientific">Bos taurus</name>
    <name type="common">Bovine</name>
    <dbReference type="NCBI Taxonomy" id="9913"/>
    <lineage>
        <taxon>Eukaryota</taxon>
        <taxon>Metazoa</taxon>
        <taxon>Chordata</taxon>
        <taxon>Craniata</taxon>
        <taxon>Vertebrata</taxon>
        <taxon>Euteleostomi</taxon>
        <taxon>Mammalia</taxon>
        <taxon>Eutheria</taxon>
        <taxon>Laurasiatheria</taxon>
        <taxon>Artiodactyla</taxon>
        <taxon>Ruminantia</taxon>
        <taxon>Pecora</taxon>
        <taxon>Bovidae</taxon>
        <taxon>Bovinae</taxon>
        <taxon>Bos</taxon>
    </lineage>
</organism>